<organism>
    <name type="scientific">Populus trichocarpa</name>
    <name type="common">Western balsam poplar</name>
    <name type="synonym">Populus balsamifera subsp. trichocarpa</name>
    <dbReference type="NCBI Taxonomy" id="3694"/>
    <lineage>
        <taxon>Eukaryota</taxon>
        <taxon>Viridiplantae</taxon>
        <taxon>Streptophyta</taxon>
        <taxon>Embryophyta</taxon>
        <taxon>Tracheophyta</taxon>
        <taxon>Spermatophyta</taxon>
        <taxon>Magnoliopsida</taxon>
        <taxon>eudicotyledons</taxon>
        <taxon>Gunneridae</taxon>
        <taxon>Pentapetalae</taxon>
        <taxon>rosids</taxon>
        <taxon>fabids</taxon>
        <taxon>Malpighiales</taxon>
        <taxon>Salicaceae</taxon>
        <taxon>Saliceae</taxon>
        <taxon>Populus</taxon>
    </lineage>
</organism>
<keyword id="KW-0066">ATP synthesis</keyword>
<keyword id="KW-0138">CF(0)</keyword>
<keyword id="KW-0150">Chloroplast</keyword>
<keyword id="KW-0375">Hydrogen ion transport</keyword>
<keyword id="KW-0406">Ion transport</keyword>
<keyword id="KW-0472">Membrane</keyword>
<keyword id="KW-0934">Plastid</keyword>
<keyword id="KW-1185">Reference proteome</keyword>
<keyword id="KW-0793">Thylakoid</keyword>
<keyword id="KW-0812">Transmembrane</keyword>
<keyword id="KW-1133">Transmembrane helix</keyword>
<keyword id="KW-0813">Transport</keyword>
<proteinExistence type="inferred from homology"/>
<name>ATPF_POPTR</name>
<protein>
    <recommendedName>
        <fullName evidence="1">ATP synthase subunit b, chloroplastic</fullName>
    </recommendedName>
    <alternativeName>
        <fullName evidence="1">ATP synthase F(0) sector subunit b</fullName>
    </alternativeName>
    <alternativeName>
        <fullName evidence="1">ATPase subunit I</fullName>
    </alternativeName>
</protein>
<comment type="function">
    <text evidence="1">F(1)F(0) ATP synthase produces ATP from ADP in the presence of a proton or sodium gradient. F-type ATPases consist of two structural domains, F(1) containing the extramembraneous catalytic core and F(0) containing the membrane proton channel, linked together by a central stalk and a peripheral stalk. During catalysis, ATP synthesis in the catalytic domain of F(1) is coupled via a rotary mechanism of the central stalk subunits to proton translocation.</text>
</comment>
<comment type="function">
    <text evidence="1">Component of the F(0) channel, it forms part of the peripheral stalk, linking F(1) to F(0).</text>
</comment>
<comment type="subunit">
    <text evidence="1">F-type ATPases have 2 components, F(1) - the catalytic core - and F(0) - the membrane proton channel. F(1) has five subunits: alpha(3), beta(3), gamma(1), delta(1), epsilon(1). F(0) has four main subunits: a(1), b(1), b'(1) and c(10-14). The alpha and beta chains form an alternating ring which encloses part of the gamma chain. F(1) is attached to F(0) by a central stalk formed by the gamma and epsilon chains, while a peripheral stalk is formed by the delta, b and b' chains.</text>
</comment>
<comment type="subcellular location">
    <subcellularLocation>
        <location evidence="1">Plastid</location>
        <location evidence="1">Chloroplast thylakoid membrane</location>
        <topology evidence="1">Single-pass membrane protein</topology>
    </subcellularLocation>
</comment>
<comment type="miscellaneous">
    <text>In plastids the F-type ATPase is also known as CF(1)CF(0).</text>
</comment>
<comment type="similarity">
    <text evidence="1">Belongs to the ATPase B chain family.</text>
</comment>
<evidence type="ECO:0000255" key="1">
    <source>
        <dbReference type="HAMAP-Rule" id="MF_01398"/>
    </source>
</evidence>
<reference key="1">
    <citation type="journal article" date="2006" name="Science">
        <title>The genome of black cottonwood, Populus trichocarpa (Torr. &amp; Gray).</title>
        <authorList>
            <person name="Tuskan G.A."/>
            <person name="Difazio S."/>
            <person name="Jansson S."/>
            <person name="Bohlmann J."/>
            <person name="Grigoriev I."/>
            <person name="Hellsten U."/>
            <person name="Putnam N."/>
            <person name="Ralph S."/>
            <person name="Rombauts S."/>
            <person name="Salamov A."/>
            <person name="Schein J."/>
            <person name="Sterck L."/>
            <person name="Aerts A."/>
            <person name="Bhalerao R.R."/>
            <person name="Bhalerao R.P."/>
            <person name="Blaudez D."/>
            <person name="Boerjan W."/>
            <person name="Brun A."/>
            <person name="Brunner A."/>
            <person name="Busov V."/>
            <person name="Campbell M."/>
            <person name="Carlson J."/>
            <person name="Chalot M."/>
            <person name="Chapman J."/>
            <person name="Chen G.-L."/>
            <person name="Cooper D."/>
            <person name="Coutinho P.M."/>
            <person name="Couturier J."/>
            <person name="Covert S."/>
            <person name="Cronk Q."/>
            <person name="Cunningham R."/>
            <person name="Davis J."/>
            <person name="Degroeve S."/>
            <person name="Dejardin A."/>
            <person name="dePamphilis C.W."/>
            <person name="Detter J."/>
            <person name="Dirks B."/>
            <person name="Dubchak I."/>
            <person name="Duplessis S."/>
            <person name="Ehlting J."/>
            <person name="Ellis B."/>
            <person name="Gendler K."/>
            <person name="Goodstein D."/>
            <person name="Gribskov M."/>
            <person name="Grimwood J."/>
            <person name="Groover A."/>
            <person name="Gunter L."/>
            <person name="Hamberger B."/>
            <person name="Heinze B."/>
            <person name="Helariutta Y."/>
            <person name="Henrissat B."/>
            <person name="Holligan D."/>
            <person name="Holt R."/>
            <person name="Huang W."/>
            <person name="Islam-Faridi N."/>
            <person name="Jones S."/>
            <person name="Jones-Rhoades M."/>
            <person name="Jorgensen R."/>
            <person name="Joshi C."/>
            <person name="Kangasjaervi J."/>
            <person name="Karlsson J."/>
            <person name="Kelleher C."/>
            <person name="Kirkpatrick R."/>
            <person name="Kirst M."/>
            <person name="Kohler A."/>
            <person name="Kalluri U."/>
            <person name="Larimer F."/>
            <person name="Leebens-Mack J."/>
            <person name="Leple J.-C."/>
            <person name="Locascio P."/>
            <person name="Lou Y."/>
            <person name="Lucas S."/>
            <person name="Martin F."/>
            <person name="Montanini B."/>
            <person name="Napoli C."/>
            <person name="Nelson D.R."/>
            <person name="Nelson C."/>
            <person name="Nieminen K."/>
            <person name="Nilsson O."/>
            <person name="Pereda V."/>
            <person name="Peter G."/>
            <person name="Philippe R."/>
            <person name="Pilate G."/>
            <person name="Poliakov A."/>
            <person name="Razumovskaya J."/>
            <person name="Richardson P."/>
            <person name="Rinaldi C."/>
            <person name="Ritland K."/>
            <person name="Rouze P."/>
            <person name="Ryaboy D."/>
            <person name="Schmutz J."/>
            <person name="Schrader J."/>
            <person name="Segerman B."/>
            <person name="Shin H."/>
            <person name="Siddiqui A."/>
            <person name="Sterky F."/>
            <person name="Terry A."/>
            <person name="Tsai C.-J."/>
            <person name="Uberbacher E."/>
            <person name="Unneberg P."/>
            <person name="Vahala J."/>
            <person name="Wall K."/>
            <person name="Wessler S."/>
            <person name="Yang G."/>
            <person name="Yin T."/>
            <person name="Douglas C."/>
            <person name="Marra M."/>
            <person name="Sandberg G."/>
            <person name="Van de Peer Y."/>
            <person name="Rokhsar D.S."/>
        </authorList>
    </citation>
    <scope>NUCLEOTIDE SEQUENCE [LARGE SCALE GENOMIC DNA]</scope>
    <source>
        <strain>cv. Nisqually</strain>
    </source>
</reference>
<geneLocation type="chloroplast"/>
<gene>
    <name evidence="1" type="primary">atpF</name>
    <name type="ordered locus">Poptr_cp006</name>
</gene>
<feature type="chain" id="PRO_0000368974" description="ATP synthase subunit b, chloroplastic">
    <location>
        <begin position="1"/>
        <end position="184"/>
    </location>
</feature>
<feature type="transmembrane region" description="Helical" evidence="1">
    <location>
        <begin position="27"/>
        <end position="49"/>
    </location>
</feature>
<sequence length="184" mass="20829">MKNITDSFVSLGHWSSAGSFGFNTDILATNPINLSVVLGVLIFFGKGVLSDLLDNRKQRILNTIRNSEELRGGAIEQLEKARARLRKVEIEADQFRVNGYSEIEREKLNLINSTYKTLEQLENYKNETIHFEQQRAINQVRQRVFQQALQGALGTLNSCLTNELHLRTISANIGMFGAMKEITN</sequence>
<accession>A4GYP4</accession>
<dbReference type="EMBL" id="EF489041">
    <property type="protein sequence ID" value="ABO36688.1"/>
    <property type="molecule type" value="Genomic_DNA"/>
</dbReference>
<dbReference type="RefSeq" id="YP_001109485.1">
    <property type="nucleotide sequence ID" value="NC_009143.1"/>
</dbReference>
<dbReference type="SMR" id="A4GYP4"/>
<dbReference type="FunCoup" id="A4GYP4">
    <property type="interactions" value="287"/>
</dbReference>
<dbReference type="STRING" id="3694.A4GYP4"/>
<dbReference type="EnsemblPlants" id="Potri.013G137900.2.v4.1">
    <property type="protein sequence ID" value="Potri.013G137900.2.v4.1"/>
    <property type="gene ID" value="Potri.013G137900.v4.1"/>
</dbReference>
<dbReference type="GeneID" id="4929639"/>
<dbReference type="Gramene" id="Potri.013G137900.2.v4.1">
    <property type="protein sequence ID" value="Potri.013G137900.2.v4.1"/>
    <property type="gene ID" value="Potri.013G137900.v4.1"/>
</dbReference>
<dbReference type="KEGG" id="pop:4929639"/>
<dbReference type="InParanoid" id="A4GYP4"/>
<dbReference type="OMA" id="IRANIGM"/>
<dbReference type="OrthoDB" id="816859at2759"/>
<dbReference type="Proteomes" id="UP000006729">
    <property type="component" value="Chloroplast"/>
</dbReference>
<dbReference type="GO" id="GO:0009535">
    <property type="term" value="C:chloroplast thylakoid membrane"/>
    <property type="evidence" value="ECO:0007669"/>
    <property type="project" value="UniProtKB-SubCell"/>
</dbReference>
<dbReference type="GO" id="GO:0045259">
    <property type="term" value="C:proton-transporting ATP synthase complex"/>
    <property type="evidence" value="ECO:0007669"/>
    <property type="project" value="UniProtKB-KW"/>
</dbReference>
<dbReference type="GO" id="GO:0046933">
    <property type="term" value="F:proton-transporting ATP synthase activity, rotational mechanism"/>
    <property type="evidence" value="ECO:0007669"/>
    <property type="project" value="UniProtKB-UniRule"/>
</dbReference>
<dbReference type="CDD" id="cd06503">
    <property type="entry name" value="ATP-synt_Fo_b"/>
    <property type="match status" value="1"/>
</dbReference>
<dbReference type="HAMAP" id="MF_01398">
    <property type="entry name" value="ATP_synth_b_bprime"/>
    <property type="match status" value="1"/>
</dbReference>
<dbReference type="InterPro" id="IPR002146">
    <property type="entry name" value="ATP_synth_b/b'su_bac/chlpt"/>
</dbReference>
<dbReference type="PANTHER" id="PTHR34264">
    <property type="entry name" value="ATP SYNTHASE SUBUNIT B, CHLOROPLASTIC"/>
    <property type="match status" value="1"/>
</dbReference>
<dbReference type="PANTHER" id="PTHR34264:SF3">
    <property type="entry name" value="ATP SYNTHASE SUBUNIT B, CHLOROPLASTIC"/>
    <property type="match status" value="1"/>
</dbReference>
<dbReference type="Pfam" id="PF00430">
    <property type="entry name" value="ATP-synt_B"/>
    <property type="match status" value="1"/>
</dbReference>